<feature type="chain" id="PRO_1000086055" description="Small ribosomal subunit protein uS5">
    <location>
        <begin position="1"/>
        <end position="167"/>
    </location>
</feature>
<feature type="domain" description="S5 DRBM" evidence="1">
    <location>
        <begin position="11"/>
        <end position="74"/>
    </location>
</feature>
<proteinExistence type="inferred from homology"/>
<gene>
    <name evidence="1" type="primary">rpsE</name>
    <name type="ordered locus">Spro_4527</name>
</gene>
<comment type="function">
    <text evidence="1">With S4 and S12 plays an important role in translational accuracy.</text>
</comment>
<comment type="function">
    <text evidence="1">Located at the back of the 30S subunit body where it stabilizes the conformation of the head with respect to the body.</text>
</comment>
<comment type="subunit">
    <text evidence="1">Part of the 30S ribosomal subunit. Contacts proteins S4 and S8.</text>
</comment>
<comment type="domain">
    <text>The N-terminal domain interacts with the head of the 30S subunit; the C-terminal domain interacts with the body and contacts protein S4. The interaction surface between S4 and S5 is involved in control of translational fidelity.</text>
</comment>
<comment type="similarity">
    <text evidence="1">Belongs to the universal ribosomal protein uS5 family.</text>
</comment>
<evidence type="ECO:0000255" key="1">
    <source>
        <dbReference type="HAMAP-Rule" id="MF_01307"/>
    </source>
</evidence>
<evidence type="ECO:0000305" key="2"/>
<sequence>MAHIEKQAGELQEKLIAVNRVSKTVKGGRIFSFTALTVVGDGNGRVGFGYGKAREVPAAIQKAMEKARRAMINVALNSGTLQHPVKGAHTGSRVFMQPASEGTGIIAGGAMRAVLEVAGVHNVLAKAYGSTNPINVVRATIAALEDMKSPEMVAAKRGKSVEEILGK</sequence>
<organism>
    <name type="scientific">Serratia proteamaculans (strain 568)</name>
    <dbReference type="NCBI Taxonomy" id="399741"/>
    <lineage>
        <taxon>Bacteria</taxon>
        <taxon>Pseudomonadati</taxon>
        <taxon>Pseudomonadota</taxon>
        <taxon>Gammaproteobacteria</taxon>
        <taxon>Enterobacterales</taxon>
        <taxon>Yersiniaceae</taxon>
        <taxon>Serratia</taxon>
    </lineage>
</organism>
<reference key="1">
    <citation type="submission" date="2007-09" db="EMBL/GenBank/DDBJ databases">
        <title>Complete sequence of chromosome of Serratia proteamaculans 568.</title>
        <authorList>
            <consortium name="US DOE Joint Genome Institute"/>
            <person name="Copeland A."/>
            <person name="Lucas S."/>
            <person name="Lapidus A."/>
            <person name="Barry K."/>
            <person name="Glavina del Rio T."/>
            <person name="Dalin E."/>
            <person name="Tice H."/>
            <person name="Pitluck S."/>
            <person name="Chain P."/>
            <person name="Malfatti S."/>
            <person name="Shin M."/>
            <person name="Vergez L."/>
            <person name="Schmutz J."/>
            <person name="Larimer F."/>
            <person name="Land M."/>
            <person name="Hauser L."/>
            <person name="Kyrpides N."/>
            <person name="Kim E."/>
            <person name="Taghavi S."/>
            <person name="Newman L."/>
            <person name="Vangronsveld J."/>
            <person name="van der Lelie D."/>
            <person name="Richardson P."/>
        </authorList>
    </citation>
    <scope>NUCLEOTIDE SEQUENCE [LARGE SCALE GENOMIC DNA]</scope>
    <source>
        <strain>568</strain>
    </source>
</reference>
<dbReference type="EMBL" id="CP000826">
    <property type="protein sequence ID" value="ABV43620.1"/>
    <property type="molecule type" value="Genomic_DNA"/>
</dbReference>
<dbReference type="SMR" id="A8GKI0"/>
<dbReference type="STRING" id="399741.Spro_4527"/>
<dbReference type="KEGG" id="spe:Spro_4527"/>
<dbReference type="eggNOG" id="COG0098">
    <property type="taxonomic scope" value="Bacteria"/>
</dbReference>
<dbReference type="HOGENOM" id="CLU_065898_2_2_6"/>
<dbReference type="OrthoDB" id="9809045at2"/>
<dbReference type="GO" id="GO:0015935">
    <property type="term" value="C:small ribosomal subunit"/>
    <property type="evidence" value="ECO:0007669"/>
    <property type="project" value="InterPro"/>
</dbReference>
<dbReference type="GO" id="GO:0019843">
    <property type="term" value="F:rRNA binding"/>
    <property type="evidence" value="ECO:0007669"/>
    <property type="project" value="UniProtKB-UniRule"/>
</dbReference>
<dbReference type="GO" id="GO:0003735">
    <property type="term" value="F:structural constituent of ribosome"/>
    <property type="evidence" value="ECO:0007669"/>
    <property type="project" value="InterPro"/>
</dbReference>
<dbReference type="GO" id="GO:0006412">
    <property type="term" value="P:translation"/>
    <property type="evidence" value="ECO:0007669"/>
    <property type="project" value="UniProtKB-UniRule"/>
</dbReference>
<dbReference type="FunFam" id="3.30.160.20:FF:000001">
    <property type="entry name" value="30S ribosomal protein S5"/>
    <property type="match status" value="1"/>
</dbReference>
<dbReference type="FunFam" id="3.30.230.10:FF:000002">
    <property type="entry name" value="30S ribosomal protein S5"/>
    <property type="match status" value="1"/>
</dbReference>
<dbReference type="Gene3D" id="3.30.160.20">
    <property type="match status" value="1"/>
</dbReference>
<dbReference type="Gene3D" id="3.30.230.10">
    <property type="match status" value="1"/>
</dbReference>
<dbReference type="HAMAP" id="MF_01307_B">
    <property type="entry name" value="Ribosomal_uS5_B"/>
    <property type="match status" value="1"/>
</dbReference>
<dbReference type="InterPro" id="IPR020568">
    <property type="entry name" value="Ribosomal_Su5_D2-typ_SF"/>
</dbReference>
<dbReference type="InterPro" id="IPR000851">
    <property type="entry name" value="Ribosomal_uS5"/>
</dbReference>
<dbReference type="InterPro" id="IPR005712">
    <property type="entry name" value="Ribosomal_uS5_bac-type"/>
</dbReference>
<dbReference type="InterPro" id="IPR005324">
    <property type="entry name" value="Ribosomal_uS5_C"/>
</dbReference>
<dbReference type="InterPro" id="IPR013810">
    <property type="entry name" value="Ribosomal_uS5_N"/>
</dbReference>
<dbReference type="InterPro" id="IPR018192">
    <property type="entry name" value="Ribosomal_uS5_N_CS"/>
</dbReference>
<dbReference type="InterPro" id="IPR014721">
    <property type="entry name" value="Ribsml_uS5_D2-typ_fold_subgr"/>
</dbReference>
<dbReference type="NCBIfam" id="TIGR01021">
    <property type="entry name" value="rpsE_bact"/>
    <property type="match status" value="1"/>
</dbReference>
<dbReference type="PANTHER" id="PTHR48277">
    <property type="entry name" value="MITOCHONDRIAL RIBOSOMAL PROTEIN S5"/>
    <property type="match status" value="1"/>
</dbReference>
<dbReference type="PANTHER" id="PTHR48277:SF1">
    <property type="entry name" value="MITOCHONDRIAL RIBOSOMAL PROTEIN S5"/>
    <property type="match status" value="1"/>
</dbReference>
<dbReference type="Pfam" id="PF00333">
    <property type="entry name" value="Ribosomal_S5"/>
    <property type="match status" value="1"/>
</dbReference>
<dbReference type="Pfam" id="PF03719">
    <property type="entry name" value="Ribosomal_S5_C"/>
    <property type="match status" value="1"/>
</dbReference>
<dbReference type="SUPFAM" id="SSF54768">
    <property type="entry name" value="dsRNA-binding domain-like"/>
    <property type="match status" value="1"/>
</dbReference>
<dbReference type="SUPFAM" id="SSF54211">
    <property type="entry name" value="Ribosomal protein S5 domain 2-like"/>
    <property type="match status" value="1"/>
</dbReference>
<dbReference type="PROSITE" id="PS00585">
    <property type="entry name" value="RIBOSOMAL_S5"/>
    <property type="match status" value="1"/>
</dbReference>
<dbReference type="PROSITE" id="PS50881">
    <property type="entry name" value="S5_DSRBD"/>
    <property type="match status" value="1"/>
</dbReference>
<keyword id="KW-0687">Ribonucleoprotein</keyword>
<keyword id="KW-0689">Ribosomal protein</keyword>
<keyword id="KW-0694">RNA-binding</keyword>
<keyword id="KW-0699">rRNA-binding</keyword>
<name>RS5_SERP5</name>
<accession>A8GKI0</accession>
<protein>
    <recommendedName>
        <fullName evidence="1">Small ribosomal subunit protein uS5</fullName>
    </recommendedName>
    <alternativeName>
        <fullName evidence="2">30S ribosomal protein S5</fullName>
    </alternativeName>
</protein>